<proteinExistence type="evidence at protein level"/>
<accession>Q6P686</accession>
<accession>Q8K3X7</accession>
<gene>
    <name type="primary">Ostf1</name>
</gene>
<dbReference type="EMBL" id="AF523266">
    <property type="protein sequence ID" value="AAM82159.1"/>
    <property type="molecule type" value="mRNA"/>
</dbReference>
<dbReference type="EMBL" id="BC062400">
    <property type="protein sequence ID" value="AAH62400.1"/>
    <property type="molecule type" value="mRNA"/>
</dbReference>
<dbReference type="RefSeq" id="NP_683690.2">
    <property type="nucleotide sequence ID" value="NM_148892.4"/>
</dbReference>
<dbReference type="RefSeq" id="XP_008758509.1">
    <property type="nucleotide sequence ID" value="XM_008760287.2"/>
</dbReference>
<dbReference type="SMR" id="Q6P686"/>
<dbReference type="FunCoup" id="Q6P686">
    <property type="interactions" value="1761"/>
</dbReference>
<dbReference type="IntAct" id="Q6P686">
    <property type="interactions" value="1"/>
</dbReference>
<dbReference type="STRING" id="10116.ENSRNOP00000016871"/>
<dbReference type="iPTMnet" id="Q6P686"/>
<dbReference type="PhosphoSitePlus" id="Q6P686"/>
<dbReference type="jPOST" id="Q6P686"/>
<dbReference type="PaxDb" id="10116-ENSRNOP00000016871"/>
<dbReference type="GeneID" id="259275"/>
<dbReference type="KEGG" id="rno:259275"/>
<dbReference type="UCSC" id="RGD:628849">
    <property type="organism name" value="rat"/>
</dbReference>
<dbReference type="AGR" id="RGD:628849"/>
<dbReference type="CTD" id="26578"/>
<dbReference type="RGD" id="628849">
    <property type="gene designation" value="Ostf1"/>
</dbReference>
<dbReference type="VEuPathDB" id="HostDB:ENSRNOG00000012156"/>
<dbReference type="eggNOG" id="ENOG502QTZB">
    <property type="taxonomic scope" value="Eukaryota"/>
</dbReference>
<dbReference type="HOGENOM" id="CLU_092255_0_0_1"/>
<dbReference type="InParanoid" id="Q6P686"/>
<dbReference type="OrthoDB" id="17519at9989"/>
<dbReference type="PhylomeDB" id="Q6P686"/>
<dbReference type="TreeFam" id="TF314534"/>
<dbReference type="Reactome" id="R-RNO-6798695">
    <property type="pathway name" value="Neutrophil degranulation"/>
</dbReference>
<dbReference type="PRO" id="PR:Q6P686"/>
<dbReference type="Proteomes" id="UP000002494">
    <property type="component" value="Chromosome 1"/>
</dbReference>
<dbReference type="Bgee" id="ENSRNOG00000012156">
    <property type="expression patterns" value="Expressed in spleen and 19 other cell types or tissues"/>
</dbReference>
<dbReference type="GO" id="GO:0005737">
    <property type="term" value="C:cytoplasm"/>
    <property type="evidence" value="ECO:0007669"/>
    <property type="project" value="UniProtKB-SubCell"/>
</dbReference>
<dbReference type="GO" id="GO:0017124">
    <property type="term" value="F:SH3 domain binding"/>
    <property type="evidence" value="ECO:0000266"/>
    <property type="project" value="RGD"/>
</dbReference>
<dbReference type="GO" id="GO:0007165">
    <property type="term" value="P:signal transduction"/>
    <property type="evidence" value="ECO:0000318"/>
    <property type="project" value="GO_Central"/>
</dbReference>
<dbReference type="CDD" id="cd11772">
    <property type="entry name" value="SH3_OSTF1"/>
    <property type="match status" value="1"/>
</dbReference>
<dbReference type="FunFam" id="1.25.40.20:FF:000066">
    <property type="entry name" value="Osteoclast-stimulating factor 1"/>
    <property type="match status" value="1"/>
</dbReference>
<dbReference type="FunFam" id="2.30.30.40:FF:000158">
    <property type="entry name" value="Osteoclast-stimulating factor 1"/>
    <property type="match status" value="1"/>
</dbReference>
<dbReference type="Gene3D" id="1.25.40.20">
    <property type="entry name" value="Ankyrin repeat-containing domain"/>
    <property type="match status" value="1"/>
</dbReference>
<dbReference type="Gene3D" id="2.30.30.40">
    <property type="entry name" value="SH3 Domains"/>
    <property type="match status" value="1"/>
</dbReference>
<dbReference type="InterPro" id="IPR002110">
    <property type="entry name" value="Ankyrin_rpt"/>
</dbReference>
<dbReference type="InterPro" id="IPR036770">
    <property type="entry name" value="Ankyrin_rpt-contain_sf"/>
</dbReference>
<dbReference type="InterPro" id="IPR036028">
    <property type="entry name" value="SH3-like_dom_sf"/>
</dbReference>
<dbReference type="InterPro" id="IPR001452">
    <property type="entry name" value="SH3_domain"/>
</dbReference>
<dbReference type="PANTHER" id="PTHR24155">
    <property type="entry name" value="OSTEOCLAST-STIMULATING FACTOR 1"/>
    <property type="match status" value="1"/>
</dbReference>
<dbReference type="PANTHER" id="PTHR24155:SF10">
    <property type="entry name" value="OSTEOCLAST-STIMULATING FACTOR 1"/>
    <property type="match status" value="1"/>
</dbReference>
<dbReference type="Pfam" id="PF00023">
    <property type="entry name" value="Ank"/>
    <property type="match status" value="1"/>
</dbReference>
<dbReference type="Pfam" id="PF12796">
    <property type="entry name" value="Ank_2"/>
    <property type="match status" value="1"/>
</dbReference>
<dbReference type="Pfam" id="PF00018">
    <property type="entry name" value="SH3_1"/>
    <property type="match status" value="1"/>
</dbReference>
<dbReference type="PRINTS" id="PR01415">
    <property type="entry name" value="ANKYRIN"/>
</dbReference>
<dbReference type="PRINTS" id="PR00499">
    <property type="entry name" value="P67PHOX"/>
</dbReference>
<dbReference type="PRINTS" id="PR00452">
    <property type="entry name" value="SH3DOMAIN"/>
</dbReference>
<dbReference type="SMART" id="SM00248">
    <property type="entry name" value="ANK"/>
    <property type="match status" value="3"/>
</dbReference>
<dbReference type="SMART" id="SM00326">
    <property type="entry name" value="SH3"/>
    <property type="match status" value="1"/>
</dbReference>
<dbReference type="SUPFAM" id="SSF48403">
    <property type="entry name" value="Ankyrin repeat"/>
    <property type="match status" value="1"/>
</dbReference>
<dbReference type="SUPFAM" id="SSF50044">
    <property type="entry name" value="SH3-domain"/>
    <property type="match status" value="1"/>
</dbReference>
<dbReference type="PROSITE" id="PS50297">
    <property type="entry name" value="ANK_REP_REGION"/>
    <property type="match status" value="1"/>
</dbReference>
<dbReference type="PROSITE" id="PS50088">
    <property type="entry name" value="ANK_REPEAT"/>
    <property type="match status" value="1"/>
</dbReference>
<dbReference type="PROSITE" id="PS50002">
    <property type="entry name" value="SH3"/>
    <property type="match status" value="1"/>
</dbReference>
<comment type="function">
    <text evidence="1">Induces bone resorption, acting probably through a signaling cascade which results in the secretion of factor(s) enhancing osteoclast formation and activity.</text>
</comment>
<comment type="subunit">
    <text evidence="1">Interacts with SRC and SMN1. Interacts with FASLG (By similarity).</text>
</comment>
<comment type="subcellular location">
    <subcellularLocation>
        <location evidence="1">Cytoplasm</location>
    </subcellularLocation>
</comment>
<comment type="domain">
    <text evidence="1">The SH3 domain mediates interaction with SMN1.</text>
</comment>
<keyword id="KW-0007">Acetylation</keyword>
<keyword id="KW-0040">ANK repeat</keyword>
<keyword id="KW-0963">Cytoplasm</keyword>
<keyword id="KW-0597">Phosphoprotein</keyword>
<keyword id="KW-1185">Reference proteome</keyword>
<keyword id="KW-0677">Repeat</keyword>
<keyword id="KW-0728">SH3 domain</keyword>
<evidence type="ECO:0000250" key="1"/>
<evidence type="ECO:0000250" key="2">
    <source>
        <dbReference type="UniProtKB" id="Q92882"/>
    </source>
</evidence>
<evidence type="ECO:0000255" key="3">
    <source>
        <dbReference type="PROSITE-ProRule" id="PRU00192"/>
    </source>
</evidence>
<evidence type="ECO:0000305" key="4"/>
<evidence type="ECO:0007744" key="5">
    <source>
    </source>
</evidence>
<name>OSTF1_RAT</name>
<organism>
    <name type="scientific">Rattus norvegicus</name>
    <name type="common">Rat</name>
    <dbReference type="NCBI Taxonomy" id="10116"/>
    <lineage>
        <taxon>Eukaryota</taxon>
        <taxon>Metazoa</taxon>
        <taxon>Chordata</taxon>
        <taxon>Craniata</taxon>
        <taxon>Vertebrata</taxon>
        <taxon>Euteleostomi</taxon>
        <taxon>Mammalia</taxon>
        <taxon>Eutheria</taxon>
        <taxon>Euarchontoglires</taxon>
        <taxon>Glires</taxon>
        <taxon>Rodentia</taxon>
        <taxon>Myomorpha</taxon>
        <taxon>Muroidea</taxon>
        <taxon>Muridae</taxon>
        <taxon>Murinae</taxon>
        <taxon>Rattus</taxon>
    </lineage>
</organism>
<feature type="initiator methionine" description="Removed" evidence="2">
    <location>
        <position position="1"/>
    </location>
</feature>
<feature type="chain" id="PRO_0000238956" description="Osteoclast-stimulating factor 1">
    <location>
        <begin position="2"/>
        <end position="214"/>
    </location>
</feature>
<feature type="domain" description="SH3" evidence="3">
    <location>
        <begin position="12"/>
        <end position="71"/>
    </location>
</feature>
<feature type="repeat" description="ANK 1">
    <location>
        <begin position="72"/>
        <end position="101"/>
    </location>
</feature>
<feature type="repeat" description="ANK 2">
    <location>
        <begin position="105"/>
        <end position="135"/>
    </location>
</feature>
<feature type="repeat" description="ANK 3">
    <location>
        <begin position="139"/>
        <end position="168"/>
    </location>
</feature>
<feature type="modified residue" description="N-acetylserine" evidence="2">
    <location>
        <position position="2"/>
    </location>
</feature>
<feature type="modified residue" description="Phosphothreonine" evidence="2">
    <location>
        <position position="200"/>
    </location>
</feature>
<feature type="modified residue" description="Phosphoserine" evidence="2">
    <location>
        <position position="202"/>
    </location>
</feature>
<feature type="modified residue" description="Phosphoserine" evidence="5">
    <location>
        <position position="213"/>
    </location>
</feature>
<feature type="sequence conflict" description="In Ref. 1; AAM82159." evidence="4" ref="1">
    <original>V</original>
    <variation>D</variation>
    <location>
        <position position="124"/>
    </location>
</feature>
<sequence length="214" mass="23669">MSKPPPKPVKPGQVKVFRALYTFEPRTPDELYFEEGDIIYITDMSDTSWWKGTCKGRTGLIPSNYVAEQAESIDNPLHEAAKRGNLSWLRECLDNRVGVNGLDKAGSTALYWACHGGHKDIVEVLFTQPNVELNQQNKLGDTALHAAAWKGYADIVQLLLAKGARTDLRNNEKKLALDMATNAACASLLKKKQATDGARTLSNAEDYLDDEDSD</sequence>
<protein>
    <recommendedName>
        <fullName>Osteoclast-stimulating factor 1</fullName>
    </recommendedName>
</protein>
<reference key="1">
    <citation type="submission" date="2002-06" db="EMBL/GenBank/DDBJ databases">
        <authorList>
            <person name="Guo J.H."/>
        </authorList>
    </citation>
    <scope>NUCLEOTIDE SEQUENCE [MRNA]</scope>
    <source>
        <strain>Sprague-Dawley</strain>
        <tissue>Kidney</tissue>
    </source>
</reference>
<reference key="2">
    <citation type="journal article" date="2004" name="Genome Res.">
        <title>The status, quality, and expansion of the NIH full-length cDNA project: the Mammalian Gene Collection (MGC).</title>
        <authorList>
            <consortium name="The MGC Project Team"/>
        </authorList>
    </citation>
    <scope>NUCLEOTIDE SEQUENCE [LARGE SCALE MRNA]</scope>
    <source>
        <tissue>Prostate</tissue>
    </source>
</reference>
<reference key="3">
    <citation type="journal article" date="2012" name="Nat. Commun.">
        <title>Quantitative maps of protein phosphorylation sites across 14 different rat organs and tissues.</title>
        <authorList>
            <person name="Lundby A."/>
            <person name="Secher A."/>
            <person name="Lage K."/>
            <person name="Nordsborg N.B."/>
            <person name="Dmytriyev A."/>
            <person name="Lundby C."/>
            <person name="Olsen J.V."/>
        </authorList>
    </citation>
    <scope>PHOSPHORYLATION [LARGE SCALE ANALYSIS] AT SER-213</scope>
    <scope>IDENTIFICATION BY MASS SPECTROMETRY [LARGE SCALE ANALYSIS]</scope>
</reference>